<evidence type="ECO:0000255" key="1">
    <source>
        <dbReference type="HAMAP-Rule" id="MF_01657"/>
    </source>
</evidence>
<gene>
    <name type="ordered locus">Spea_2117</name>
</gene>
<feature type="chain" id="PRO_0000387740" description="Acetaldehyde dehydrogenase">
    <location>
        <begin position="1"/>
        <end position="307"/>
    </location>
</feature>
<feature type="active site" description="Acyl-thioester intermediate" evidence="1">
    <location>
        <position position="130"/>
    </location>
</feature>
<feature type="binding site" evidence="1">
    <location>
        <begin position="12"/>
        <end position="15"/>
    </location>
    <ligand>
        <name>NAD(+)</name>
        <dbReference type="ChEBI" id="CHEBI:57540"/>
    </ligand>
</feature>
<feature type="binding site" evidence="1">
    <location>
        <begin position="161"/>
        <end position="169"/>
    </location>
    <ligand>
        <name>NAD(+)</name>
        <dbReference type="ChEBI" id="CHEBI:57540"/>
    </ligand>
</feature>
<feature type="binding site" evidence="1">
    <location>
        <position position="272"/>
    </location>
    <ligand>
        <name>NAD(+)</name>
        <dbReference type="ChEBI" id="CHEBI:57540"/>
    </ligand>
</feature>
<reference key="1">
    <citation type="submission" date="2007-10" db="EMBL/GenBank/DDBJ databases">
        <title>Complete sequence of Shewanella pealeana ATCC 700345.</title>
        <authorList>
            <consortium name="US DOE Joint Genome Institute"/>
            <person name="Copeland A."/>
            <person name="Lucas S."/>
            <person name="Lapidus A."/>
            <person name="Barry K."/>
            <person name="Glavina del Rio T."/>
            <person name="Dalin E."/>
            <person name="Tice H."/>
            <person name="Pitluck S."/>
            <person name="Chertkov O."/>
            <person name="Brettin T."/>
            <person name="Bruce D."/>
            <person name="Detter J.C."/>
            <person name="Han C."/>
            <person name="Schmutz J."/>
            <person name="Larimer F."/>
            <person name="Land M."/>
            <person name="Hauser L."/>
            <person name="Kyrpides N."/>
            <person name="Kim E."/>
            <person name="Zhao J.-S.Z."/>
            <person name="Manno D."/>
            <person name="Hawari J."/>
            <person name="Richardson P."/>
        </authorList>
    </citation>
    <scope>NUCLEOTIDE SEQUENCE [LARGE SCALE GENOMIC DNA]</scope>
    <source>
        <strain>ATCC 700345 / ANG-SQ1</strain>
    </source>
</reference>
<organism>
    <name type="scientific">Shewanella pealeana (strain ATCC 700345 / ANG-SQ1)</name>
    <dbReference type="NCBI Taxonomy" id="398579"/>
    <lineage>
        <taxon>Bacteria</taxon>
        <taxon>Pseudomonadati</taxon>
        <taxon>Pseudomonadota</taxon>
        <taxon>Gammaproteobacteria</taxon>
        <taxon>Alteromonadales</taxon>
        <taxon>Shewanellaceae</taxon>
        <taxon>Shewanella</taxon>
    </lineage>
</organism>
<comment type="catalytic activity">
    <reaction evidence="1">
        <text>acetaldehyde + NAD(+) + CoA = acetyl-CoA + NADH + H(+)</text>
        <dbReference type="Rhea" id="RHEA:23288"/>
        <dbReference type="ChEBI" id="CHEBI:15343"/>
        <dbReference type="ChEBI" id="CHEBI:15378"/>
        <dbReference type="ChEBI" id="CHEBI:57287"/>
        <dbReference type="ChEBI" id="CHEBI:57288"/>
        <dbReference type="ChEBI" id="CHEBI:57540"/>
        <dbReference type="ChEBI" id="CHEBI:57945"/>
        <dbReference type="EC" id="1.2.1.10"/>
    </reaction>
</comment>
<comment type="similarity">
    <text evidence="1">Belongs to the acetaldehyde dehydrogenase family.</text>
</comment>
<sequence>MTSKIKCALIGSGNIGTDLLYKLLRSDVLEPVWMVGIDPDSDGLAKAKAAGLKVTADGIDGLLPFVEADEIKIAFDATSAYVHAENSRKLNELGVVMIDLTPAAIGPFCVPPVNLEQLDENINNINMVTCGGQATIPMVAAVSQVQAVEYGEIVATVSSRSVGPGTRQNIDEFTRTTAGAVEQIGGAEKGKAIIVINPAEPPLLMRDTIHCLTKDQPDEQAITASVHKMIEQVQQYVPGYTLKNGPVFDGRKVTIFLEVEGLGDYLPKYAGNLDIMTAAAARTAEMLASKMLNVKTHLNVTKEAALA</sequence>
<dbReference type="EC" id="1.2.1.10" evidence="1"/>
<dbReference type="EMBL" id="CP000851">
    <property type="protein sequence ID" value="ABV87437.1"/>
    <property type="molecule type" value="Genomic_DNA"/>
</dbReference>
<dbReference type="RefSeq" id="WP_012155353.1">
    <property type="nucleotide sequence ID" value="NC_009901.1"/>
</dbReference>
<dbReference type="SMR" id="A8H4F0"/>
<dbReference type="STRING" id="398579.Spea_2117"/>
<dbReference type="KEGG" id="spl:Spea_2117"/>
<dbReference type="eggNOG" id="COG4569">
    <property type="taxonomic scope" value="Bacteria"/>
</dbReference>
<dbReference type="HOGENOM" id="CLU_062208_0_0_6"/>
<dbReference type="OrthoDB" id="9786743at2"/>
<dbReference type="Proteomes" id="UP000002608">
    <property type="component" value="Chromosome"/>
</dbReference>
<dbReference type="GO" id="GO:0008774">
    <property type="term" value="F:acetaldehyde dehydrogenase (acetylating) activity"/>
    <property type="evidence" value="ECO:0007669"/>
    <property type="project" value="UniProtKB-UniRule"/>
</dbReference>
<dbReference type="GO" id="GO:0051287">
    <property type="term" value="F:NAD binding"/>
    <property type="evidence" value="ECO:0007669"/>
    <property type="project" value="UniProtKB-UniRule"/>
</dbReference>
<dbReference type="GO" id="GO:0009056">
    <property type="term" value="P:catabolic process"/>
    <property type="evidence" value="ECO:0007669"/>
    <property type="project" value="UniProtKB-KW"/>
</dbReference>
<dbReference type="CDD" id="cd23933">
    <property type="entry name" value="ALDH_C"/>
    <property type="match status" value="1"/>
</dbReference>
<dbReference type="Gene3D" id="3.30.360.10">
    <property type="entry name" value="Dihydrodipicolinate Reductase, domain 2"/>
    <property type="match status" value="1"/>
</dbReference>
<dbReference type="Gene3D" id="3.40.50.720">
    <property type="entry name" value="NAD(P)-binding Rossmann-like Domain"/>
    <property type="match status" value="1"/>
</dbReference>
<dbReference type="HAMAP" id="MF_01657">
    <property type="entry name" value="Ac_ald_DH_ac"/>
    <property type="match status" value="1"/>
</dbReference>
<dbReference type="InterPro" id="IPR003361">
    <property type="entry name" value="Acetaldehyde_dehydrogenase"/>
</dbReference>
<dbReference type="InterPro" id="IPR015426">
    <property type="entry name" value="Acetylaldehyde_DH_C"/>
</dbReference>
<dbReference type="InterPro" id="IPR036291">
    <property type="entry name" value="NAD(P)-bd_dom_sf"/>
</dbReference>
<dbReference type="InterPro" id="IPR000534">
    <property type="entry name" value="Semialdehyde_DH_NAD-bd"/>
</dbReference>
<dbReference type="NCBIfam" id="TIGR03215">
    <property type="entry name" value="ac_ald_DH_ac"/>
    <property type="match status" value="1"/>
</dbReference>
<dbReference type="NCBIfam" id="NF006157">
    <property type="entry name" value="PRK08300.1"/>
    <property type="match status" value="1"/>
</dbReference>
<dbReference type="Pfam" id="PF09290">
    <property type="entry name" value="AcetDehyd-dimer"/>
    <property type="match status" value="1"/>
</dbReference>
<dbReference type="PIRSF" id="PIRSF015689">
    <property type="entry name" value="Actaldh_dh_actl"/>
    <property type="match status" value="1"/>
</dbReference>
<dbReference type="SMART" id="SM00859">
    <property type="entry name" value="Semialdhyde_dh"/>
    <property type="match status" value="1"/>
</dbReference>
<dbReference type="SUPFAM" id="SSF55347">
    <property type="entry name" value="Glyceraldehyde-3-phosphate dehydrogenase-like, C-terminal domain"/>
    <property type="match status" value="1"/>
</dbReference>
<dbReference type="SUPFAM" id="SSF51735">
    <property type="entry name" value="NAD(P)-binding Rossmann-fold domains"/>
    <property type="match status" value="1"/>
</dbReference>
<protein>
    <recommendedName>
        <fullName evidence="1">Acetaldehyde dehydrogenase</fullName>
        <ecNumber evidence="1">1.2.1.10</ecNumber>
    </recommendedName>
    <alternativeName>
        <fullName evidence="1">Acetaldehyde dehydrogenase [acetylating]</fullName>
    </alternativeName>
</protein>
<keyword id="KW-0058">Aromatic hydrocarbons catabolism</keyword>
<keyword id="KW-0520">NAD</keyword>
<keyword id="KW-0560">Oxidoreductase</keyword>
<keyword id="KW-1185">Reference proteome</keyword>
<proteinExistence type="inferred from homology"/>
<accession>A8H4F0</accession>
<name>ACDH_SHEPA</name>